<dbReference type="EC" id="3.1.2.-" evidence="1"/>
<dbReference type="EC" id="3.5.1.-" evidence="1"/>
<dbReference type="EC" id="3.5.1.124" evidence="1"/>
<dbReference type="EMBL" id="CP000243">
    <property type="protein sequence ID" value="ABE07639.1"/>
    <property type="molecule type" value="Genomic_DNA"/>
</dbReference>
<dbReference type="RefSeq" id="WP_000218046.1">
    <property type="nucleotide sequence ID" value="NZ_CP064825.1"/>
</dbReference>
<dbReference type="SMR" id="Q1RAH5"/>
<dbReference type="MEROPS" id="C56.006"/>
<dbReference type="KEGG" id="eci:UTI89_C2166"/>
<dbReference type="HOGENOM" id="CLU_066933_0_0_6"/>
<dbReference type="Proteomes" id="UP000001952">
    <property type="component" value="Chromosome"/>
</dbReference>
<dbReference type="GO" id="GO:0005737">
    <property type="term" value="C:cytoplasm"/>
    <property type="evidence" value="ECO:0007669"/>
    <property type="project" value="UniProtKB-SubCell"/>
</dbReference>
<dbReference type="GO" id="GO:0019172">
    <property type="term" value="F:glyoxalase III activity"/>
    <property type="evidence" value="ECO:0007669"/>
    <property type="project" value="TreeGrafter"/>
</dbReference>
<dbReference type="GO" id="GO:0036524">
    <property type="term" value="F:protein deglycase activity"/>
    <property type="evidence" value="ECO:0007669"/>
    <property type="project" value="UniProtKB-UniRule"/>
</dbReference>
<dbReference type="GO" id="GO:0016790">
    <property type="term" value="F:thiolester hydrolase activity"/>
    <property type="evidence" value="ECO:0007669"/>
    <property type="project" value="UniProtKB-UniRule"/>
</dbReference>
<dbReference type="GO" id="GO:0008270">
    <property type="term" value="F:zinc ion binding"/>
    <property type="evidence" value="ECO:0007669"/>
    <property type="project" value="UniProtKB-UniRule"/>
</dbReference>
<dbReference type="GO" id="GO:0006281">
    <property type="term" value="P:DNA repair"/>
    <property type="evidence" value="ECO:0007669"/>
    <property type="project" value="UniProtKB-UniRule"/>
</dbReference>
<dbReference type="GO" id="GO:0019243">
    <property type="term" value="P:methylglyoxal catabolic process to D-lactate via S-lactoyl-glutathione"/>
    <property type="evidence" value="ECO:0007669"/>
    <property type="project" value="TreeGrafter"/>
</dbReference>
<dbReference type="GO" id="GO:0030091">
    <property type="term" value="P:protein repair"/>
    <property type="evidence" value="ECO:0007669"/>
    <property type="project" value="UniProtKB-UniRule"/>
</dbReference>
<dbReference type="Gene3D" id="3.40.50.880">
    <property type="match status" value="1"/>
</dbReference>
<dbReference type="HAMAP" id="MF_01046">
    <property type="entry name" value="Deglycase_HchA"/>
    <property type="match status" value="1"/>
</dbReference>
<dbReference type="InterPro" id="IPR029062">
    <property type="entry name" value="Class_I_gatase-like"/>
</dbReference>
<dbReference type="InterPro" id="IPR017283">
    <property type="entry name" value="HchA"/>
</dbReference>
<dbReference type="InterPro" id="IPR050325">
    <property type="entry name" value="Prot/Nucl_acid_deglycase"/>
</dbReference>
<dbReference type="NCBIfam" id="NF003168">
    <property type="entry name" value="PRK04155.1"/>
    <property type="match status" value="1"/>
</dbReference>
<dbReference type="PANTHER" id="PTHR48094">
    <property type="entry name" value="PROTEIN/NUCLEIC ACID DEGLYCASE DJ-1-RELATED"/>
    <property type="match status" value="1"/>
</dbReference>
<dbReference type="PANTHER" id="PTHR48094:SF20">
    <property type="entry name" value="PROTEIN_NUCLEIC ACID DEGLYCASE 1"/>
    <property type="match status" value="1"/>
</dbReference>
<dbReference type="PIRSF" id="PIRSF037798">
    <property type="entry name" value="Chaperone_HchA"/>
    <property type="match status" value="1"/>
</dbReference>
<dbReference type="SUPFAM" id="SSF52317">
    <property type="entry name" value="Class I glutamine amidotransferase-like"/>
    <property type="match status" value="1"/>
</dbReference>
<organism>
    <name type="scientific">Escherichia coli (strain UTI89 / UPEC)</name>
    <dbReference type="NCBI Taxonomy" id="364106"/>
    <lineage>
        <taxon>Bacteria</taxon>
        <taxon>Pseudomonadati</taxon>
        <taxon>Pseudomonadota</taxon>
        <taxon>Gammaproteobacteria</taxon>
        <taxon>Enterobacterales</taxon>
        <taxon>Enterobacteriaceae</taxon>
        <taxon>Escherichia</taxon>
    </lineage>
</organism>
<evidence type="ECO:0000255" key="1">
    <source>
        <dbReference type="HAMAP-Rule" id="MF_01046"/>
    </source>
</evidence>
<protein>
    <recommendedName>
        <fullName evidence="1">Protein/nucleic acid deglycase HchA</fullName>
        <ecNumber evidence="1">3.1.2.-</ecNumber>
        <ecNumber evidence="1">3.5.1.-</ecNumber>
        <ecNumber evidence="1">3.5.1.124</ecNumber>
    </recommendedName>
    <alternativeName>
        <fullName evidence="1">Maillard deglycase</fullName>
    </alternativeName>
</protein>
<comment type="function">
    <text evidence="1">Protein and nucleotide deglycase that catalyzes the deglycation of the Maillard adducts formed between amino groups of proteins or nucleotides and reactive carbonyl groups of glyoxals. Thus, functions as a protein deglycase that repairs methylglyoxal- and glyoxal-glycated proteins, and releases repaired proteins and lactate or glycolate, respectively. Deglycates cysteine, arginine and lysine residues in proteins, and thus reactivates these proteins by reversing glycation by glyoxals. Acts on early glycation intermediates (hemithioacetals and aminocarbinols), preventing the formation of Schiff bases and advanced glycation endproducts (AGE). Also functions as a nucleotide deglycase able to repair glycated guanine in the free nucleotide pool (GTP, GDP, GMP, dGTP) and in DNA and RNA. Is thus involved in a major nucleotide repair system named guanine glycation repair (GG repair), dedicated to reversing methylglyoxal and glyoxal damage via nucleotide sanitization and direct nucleic acid repair. Plays an important role in protecting cells from carbonyl stress.</text>
</comment>
<comment type="catalytic activity">
    <reaction evidence="1">
        <text>N(omega)-(1-hydroxy-2-oxopropyl)-L-arginyl-[protein] + H2O = lactate + L-arginyl-[protein] + H(+)</text>
        <dbReference type="Rhea" id="RHEA:49548"/>
        <dbReference type="Rhea" id="RHEA-COMP:10532"/>
        <dbReference type="Rhea" id="RHEA-COMP:12428"/>
        <dbReference type="ChEBI" id="CHEBI:15377"/>
        <dbReference type="ChEBI" id="CHEBI:15378"/>
        <dbReference type="ChEBI" id="CHEBI:24996"/>
        <dbReference type="ChEBI" id="CHEBI:29965"/>
        <dbReference type="ChEBI" id="CHEBI:131708"/>
        <dbReference type="EC" id="3.5.1.124"/>
    </reaction>
</comment>
<comment type="catalytic activity">
    <reaction evidence="1">
        <text>N(6)-(1-hydroxy-2-oxopropyl)-L-lysyl-[protein] + H2O = lactate + L-lysyl-[protein] + H(+)</text>
        <dbReference type="Rhea" id="RHEA:49552"/>
        <dbReference type="Rhea" id="RHEA-COMP:9752"/>
        <dbReference type="Rhea" id="RHEA-COMP:12429"/>
        <dbReference type="ChEBI" id="CHEBI:15377"/>
        <dbReference type="ChEBI" id="CHEBI:15378"/>
        <dbReference type="ChEBI" id="CHEBI:24996"/>
        <dbReference type="ChEBI" id="CHEBI:29969"/>
        <dbReference type="ChEBI" id="CHEBI:131709"/>
        <dbReference type="EC" id="3.5.1.124"/>
    </reaction>
</comment>
<comment type="catalytic activity">
    <reaction evidence="1">
        <text>S-(1-hydroxy-2-oxopropyl)-L-cysteinyl-[protein] + H2O = lactate + L-cysteinyl-[protein] + H(+)</text>
        <dbReference type="Rhea" id="RHEA:49556"/>
        <dbReference type="Rhea" id="RHEA-COMP:10131"/>
        <dbReference type="Rhea" id="RHEA-COMP:12430"/>
        <dbReference type="ChEBI" id="CHEBI:15377"/>
        <dbReference type="ChEBI" id="CHEBI:15378"/>
        <dbReference type="ChEBI" id="CHEBI:24996"/>
        <dbReference type="ChEBI" id="CHEBI:29950"/>
        <dbReference type="ChEBI" id="CHEBI:131710"/>
        <dbReference type="EC" id="3.5.1.124"/>
    </reaction>
</comment>
<comment type="catalytic activity">
    <reaction evidence="1">
        <text>N(omega)-(1-hydroxy-2-oxoethyl)-L-arginyl-[protein] + H2O = L-arginyl-[protein] + glycolate + H(+)</text>
        <dbReference type="Rhea" id="RHEA:57188"/>
        <dbReference type="Rhea" id="RHEA-COMP:10532"/>
        <dbReference type="Rhea" id="RHEA-COMP:14844"/>
        <dbReference type="ChEBI" id="CHEBI:15377"/>
        <dbReference type="ChEBI" id="CHEBI:15378"/>
        <dbReference type="ChEBI" id="CHEBI:29805"/>
        <dbReference type="ChEBI" id="CHEBI:29965"/>
        <dbReference type="ChEBI" id="CHEBI:141553"/>
        <dbReference type="EC" id="3.5.1.124"/>
    </reaction>
</comment>
<comment type="catalytic activity">
    <reaction evidence="1">
        <text>N(6)-(1-hydroxy-2-oxoethyl)-L-lysyl-[protein] + H2O = glycolate + L-lysyl-[protein] + H(+)</text>
        <dbReference type="Rhea" id="RHEA:57192"/>
        <dbReference type="Rhea" id="RHEA-COMP:9752"/>
        <dbReference type="Rhea" id="RHEA-COMP:14845"/>
        <dbReference type="ChEBI" id="CHEBI:15377"/>
        <dbReference type="ChEBI" id="CHEBI:15378"/>
        <dbReference type="ChEBI" id="CHEBI:29805"/>
        <dbReference type="ChEBI" id="CHEBI:29969"/>
        <dbReference type="ChEBI" id="CHEBI:141554"/>
        <dbReference type="EC" id="3.5.1.124"/>
    </reaction>
</comment>
<comment type="catalytic activity">
    <reaction evidence="1">
        <text>S-(1-hydroxy-2-oxoethyl)-L-cysteinyl-[protein] + H2O = glycolate + L-cysteinyl-[protein] + H(+)</text>
        <dbReference type="Rhea" id="RHEA:57196"/>
        <dbReference type="Rhea" id="RHEA-COMP:10131"/>
        <dbReference type="Rhea" id="RHEA-COMP:14846"/>
        <dbReference type="ChEBI" id="CHEBI:15377"/>
        <dbReference type="ChEBI" id="CHEBI:15378"/>
        <dbReference type="ChEBI" id="CHEBI:29805"/>
        <dbReference type="ChEBI" id="CHEBI:29950"/>
        <dbReference type="ChEBI" id="CHEBI:141555"/>
        <dbReference type="EC" id="3.5.1.124"/>
    </reaction>
</comment>
<comment type="catalytic activity">
    <reaction evidence="1">
        <text>N(2)-(1-hydroxy-2-oxopropyl)-dGTP + H2O = lactate + dGTP + H(+)</text>
        <dbReference type="Rhea" id="RHEA:57244"/>
        <dbReference type="ChEBI" id="CHEBI:15377"/>
        <dbReference type="ChEBI" id="CHEBI:15378"/>
        <dbReference type="ChEBI" id="CHEBI:24996"/>
        <dbReference type="ChEBI" id="CHEBI:61429"/>
        <dbReference type="ChEBI" id="CHEBI:141569"/>
    </reaction>
</comment>
<comment type="catalytic activity">
    <reaction evidence="1">
        <text>N(2)-(1-hydroxy-2-oxopropyl)-GTP + H2O = lactate + GTP + H(+)</text>
        <dbReference type="Rhea" id="RHEA:57256"/>
        <dbReference type="ChEBI" id="CHEBI:15377"/>
        <dbReference type="ChEBI" id="CHEBI:15378"/>
        <dbReference type="ChEBI" id="CHEBI:24996"/>
        <dbReference type="ChEBI" id="CHEBI:37565"/>
        <dbReference type="ChEBI" id="CHEBI:141570"/>
    </reaction>
</comment>
<comment type="catalytic activity">
    <reaction evidence="1">
        <text>N(2)-(1-hydroxy-2-oxopropyl)-GDP + H2O = lactate + GDP + H(+)</text>
        <dbReference type="Rhea" id="RHEA:57260"/>
        <dbReference type="ChEBI" id="CHEBI:15377"/>
        <dbReference type="ChEBI" id="CHEBI:15378"/>
        <dbReference type="ChEBI" id="CHEBI:24996"/>
        <dbReference type="ChEBI" id="CHEBI:58189"/>
        <dbReference type="ChEBI" id="CHEBI:141573"/>
    </reaction>
</comment>
<comment type="catalytic activity">
    <reaction evidence="1">
        <text>N(2)-(1-hydroxy-2-oxopropyl)-GMP + H2O = lactate + GMP + H(+)</text>
        <dbReference type="Rhea" id="RHEA:57268"/>
        <dbReference type="ChEBI" id="CHEBI:15377"/>
        <dbReference type="ChEBI" id="CHEBI:15378"/>
        <dbReference type="ChEBI" id="CHEBI:24996"/>
        <dbReference type="ChEBI" id="CHEBI:58115"/>
        <dbReference type="ChEBI" id="CHEBI:141575"/>
    </reaction>
</comment>
<comment type="catalytic activity">
    <reaction evidence="1">
        <text>N(2)-(1-hydroxy-2-oxoethyl)-dGTP + H2O = dGTP + glycolate + H(+)</text>
        <dbReference type="Rhea" id="RHEA:57248"/>
        <dbReference type="ChEBI" id="CHEBI:15377"/>
        <dbReference type="ChEBI" id="CHEBI:15378"/>
        <dbReference type="ChEBI" id="CHEBI:29805"/>
        <dbReference type="ChEBI" id="CHEBI:61429"/>
        <dbReference type="ChEBI" id="CHEBI:141572"/>
    </reaction>
</comment>
<comment type="catalytic activity">
    <reaction evidence="1">
        <text>N(2)-(1-hydroxy-2-oxoethyl)-GTP + H2O = glycolate + GTP + H(+)</text>
        <dbReference type="Rhea" id="RHEA:57252"/>
        <dbReference type="ChEBI" id="CHEBI:15377"/>
        <dbReference type="ChEBI" id="CHEBI:15378"/>
        <dbReference type="ChEBI" id="CHEBI:29805"/>
        <dbReference type="ChEBI" id="CHEBI:37565"/>
        <dbReference type="ChEBI" id="CHEBI:141571"/>
    </reaction>
</comment>
<comment type="catalytic activity">
    <reaction evidence="1">
        <text>N(2)-(1-hydroxy-2-oxoethyl)-GDP + H2O = glycolate + GDP + H(+)</text>
        <dbReference type="Rhea" id="RHEA:57264"/>
        <dbReference type="ChEBI" id="CHEBI:15377"/>
        <dbReference type="ChEBI" id="CHEBI:15378"/>
        <dbReference type="ChEBI" id="CHEBI:29805"/>
        <dbReference type="ChEBI" id="CHEBI:58189"/>
        <dbReference type="ChEBI" id="CHEBI:141574"/>
    </reaction>
</comment>
<comment type="catalytic activity">
    <reaction evidence="1">
        <text>N(2)-(1-hydroxy-2-oxoethyl)-GMP + H2O = glycolate + GMP + H(+)</text>
        <dbReference type="Rhea" id="RHEA:57304"/>
        <dbReference type="ChEBI" id="CHEBI:15377"/>
        <dbReference type="ChEBI" id="CHEBI:15378"/>
        <dbReference type="ChEBI" id="CHEBI:29805"/>
        <dbReference type="ChEBI" id="CHEBI:58115"/>
        <dbReference type="ChEBI" id="CHEBI:141576"/>
    </reaction>
</comment>
<comment type="catalytic activity">
    <reaction evidence="1">
        <text>an N(2)-(1-hydroxy-2-oxopropyl)-guanosine in RNA + H2O = a guanosine in RNA + lactate + H(+)</text>
        <dbReference type="Rhea" id="RHEA:57288"/>
        <dbReference type="Rhea" id="RHEA-COMP:14855"/>
        <dbReference type="Rhea" id="RHEA-COMP:14858"/>
        <dbReference type="ChEBI" id="CHEBI:15377"/>
        <dbReference type="ChEBI" id="CHEBI:15378"/>
        <dbReference type="ChEBI" id="CHEBI:24996"/>
        <dbReference type="ChEBI" id="CHEBI:74269"/>
        <dbReference type="ChEBI" id="CHEBI:141580"/>
    </reaction>
</comment>
<comment type="catalytic activity">
    <reaction evidence="1">
        <text>an N(2)-(1-hydroxy-2-oxopropyl)-2'-deoxyguanosine in DNA + H2O = a 2'-deoxyguanosine in DNA + lactate + H(+)</text>
        <dbReference type="Rhea" id="RHEA:57300"/>
        <dbReference type="Rhea" id="RHEA-COMP:11367"/>
        <dbReference type="Rhea" id="RHEA-COMP:14856"/>
        <dbReference type="ChEBI" id="CHEBI:15377"/>
        <dbReference type="ChEBI" id="CHEBI:15378"/>
        <dbReference type="ChEBI" id="CHEBI:24996"/>
        <dbReference type="ChEBI" id="CHEBI:85445"/>
        <dbReference type="ChEBI" id="CHEBI:141578"/>
    </reaction>
</comment>
<comment type="catalytic activity">
    <reaction evidence="1">
        <text>an N(2)-(1-hydroxy-2-oxoethyl)-guanosine in RNA + H2O = a guanosine in RNA + glycolate + H(+)</text>
        <dbReference type="Rhea" id="RHEA:57292"/>
        <dbReference type="Rhea" id="RHEA-COMP:14855"/>
        <dbReference type="Rhea" id="RHEA-COMP:14859"/>
        <dbReference type="ChEBI" id="CHEBI:15377"/>
        <dbReference type="ChEBI" id="CHEBI:15378"/>
        <dbReference type="ChEBI" id="CHEBI:29805"/>
        <dbReference type="ChEBI" id="CHEBI:74269"/>
        <dbReference type="ChEBI" id="CHEBI:141581"/>
    </reaction>
</comment>
<comment type="catalytic activity">
    <reaction evidence="1">
        <text>an N(2)-(1-hydroxy-2-oxoethyl)-2'-deoxyguanosine in DNA + H2O = a 2'-deoxyguanosine in DNA + glycolate + H(+)</text>
        <dbReference type="Rhea" id="RHEA:57296"/>
        <dbReference type="Rhea" id="RHEA-COMP:11367"/>
        <dbReference type="Rhea" id="RHEA-COMP:14857"/>
        <dbReference type="ChEBI" id="CHEBI:15377"/>
        <dbReference type="ChEBI" id="CHEBI:15378"/>
        <dbReference type="ChEBI" id="CHEBI:29805"/>
        <dbReference type="ChEBI" id="CHEBI:85445"/>
        <dbReference type="ChEBI" id="CHEBI:141579"/>
    </reaction>
</comment>
<comment type="subunit">
    <text evidence="1">Homodimer.</text>
</comment>
<comment type="subcellular location">
    <subcellularLocation>
        <location evidence="1">Cytoplasm</location>
    </subcellularLocation>
</comment>
<comment type="induction">
    <text evidence="1">By heat shock.</text>
</comment>
<comment type="similarity">
    <text evidence="1">Belongs to the peptidase C56 family. HchA subfamily.</text>
</comment>
<accession>Q1RAH5</accession>
<sequence>MTVQKSKNPQVDIAEDNAFFPSEYSLSQYTSPVSDLDGVDYPKPYRGKHKILVIAADERYLPTDNGKLFSTGNHPIETLLPLYHLHAAGFEFEVATISGLMTKFEYWAMPHKDEKVMPFFEQHKSLFRNPKKLADVVASLNADSEYAAIFVPGGHGALIGLPESEDVAAALQWAIENDRFVISLCHGPAAFLALRHGDNPLNGYSICAFPDAADKQTPEIGYMPGHLTWYFGEELKKMGMNIINDDITGRVHKDRKVLTGDSPFAANALGKLAAQEMLAAYAG</sequence>
<keyword id="KW-0963">Cytoplasm</keyword>
<keyword id="KW-0227">DNA damage</keyword>
<keyword id="KW-0234">DNA repair</keyword>
<keyword id="KW-0378">Hydrolase</keyword>
<keyword id="KW-0479">Metal-binding</keyword>
<keyword id="KW-0346">Stress response</keyword>
<keyword id="KW-0862">Zinc</keyword>
<gene>
    <name evidence="1" type="primary">hchA</name>
    <name type="ordered locus">UTI89_C2166</name>
</gene>
<name>HCHA_ECOUT</name>
<reference key="1">
    <citation type="journal article" date="2006" name="Proc. Natl. Acad. Sci. U.S.A.">
        <title>Identification of genes subject to positive selection in uropathogenic strains of Escherichia coli: a comparative genomics approach.</title>
        <authorList>
            <person name="Chen S.L."/>
            <person name="Hung C.-S."/>
            <person name="Xu J."/>
            <person name="Reigstad C.S."/>
            <person name="Magrini V."/>
            <person name="Sabo A."/>
            <person name="Blasiar D."/>
            <person name="Bieri T."/>
            <person name="Meyer R.R."/>
            <person name="Ozersky P."/>
            <person name="Armstrong J.R."/>
            <person name="Fulton R.S."/>
            <person name="Latreille J.P."/>
            <person name="Spieth J."/>
            <person name="Hooton T.M."/>
            <person name="Mardis E.R."/>
            <person name="Hultgren S.J."/>
            <person name="Gordon J.I."/>
        </authorList>
    </citation>
    <scope>NUCLEOTIDE SEQUENCE [LARGE SCALE GENOMIC DNA]</scope>
    <source>
        <strain>UTI89 / UPEC</strain>
    </source>
</reference>
<feature type="chain" id="PRO_1000064278" description="Protein/nucleic acid deglycase HchA">
    <location>
        <begin position="1"/>
        <end position="283"/>
    </location>
</feature>
<feature type="active site" description="Nucleophile" evidence="1">
    <location>
        <position position="185"/>
    </location>
</feature>
<feature type="binding site" evidence="1">
    <location>
        <position position="86"/>
    </location>
    <ligand>
        <name>Zn(2+)</name>
        <dbReference type="ChEBI" id="CHEBI:29105"/>
    </ligand>
</feature>
<feature type="binding site" evidence="1">
    <location>
        <position position="91"/>
    </location>
    <ligand>
        <name>Zn(2+)</name>
        <dbReference type="ChEBI" id="CHEBI:29105"/>
    </ligand>
</feature>
<feature type="binding site" evidence="1">
    <location>
        <position position="123"/>
    </location>
    <ligand>
        <name>Zn(2+)</name>
        <dbReference type="ChEBI" id="CHEBI:29105"/>
    </ligand>
</feature>
<proteinExistence type="inferred from homology"/>